<protein>
    <recommendedName>
        <fullName evidence="1">Transcription antitermination protein NusB</fullName>
    </recommendedName>
    <alternativeName>
        <fullName evidence="1">Antitermination factor NusB</fullName>
    </alternativeName>
</protein>
<sequence>MGRRASRETAMKLLYQLEIQKTDRDEQINMALEDESLTKNDREYIKGIVDGVYEKTPVLDGIIEKKATGWKINRLSKIDLSVLRIGIYEILYRDDIPFSVSVNEAVELAKKYSNEDAGAFVNGLLAKVSKGDLPQETSANEVDSQ</sequence>
<keyword id="KW-1185">Reference proteome</keyword>
<keyword id="KW-0694">RNA-binding</keyword>
<keyword id="KW-0804">Transcription</keyword>
<keyword id="KW-0889">Transcription antitermination</keyword>
<keyword id="KW-0805">Transcription regulation</keyword>
<proteinExistence type="inferred from homology"/>
<gene>
    <name evidence="1" type="primary">nusB</name>
    <name type="ordered locus">Ccel_1905</name>
</gene>
<reference key="1">
    <citation type="submission" date="2009-01" db="EMBL/GenBank/DDBJ databases">
        <title>Complete sequence of Clostridium cellulolyticum H10.</title>
        <authorList>
            <consortium name="US DOE Joint Genome Institute"/>
            <person name="Lucas S."/>
            <person name="Copeland A."/>
            <person name="Lapidus A."/>
            <person name="Glavina del Rio T."/>
            <person name="Dalin E."/>
            <person name="Tice H."/>
            <person name="Bruce D."/>
            <person name="Goodwin L."/>
            <person name="Pitluck S."/>
            <person name="Chertkov O."/>
            <person name="Saunders E."/>
            <person name="Brettin T."/>
            <person name="Detter J.C."/>
            <person name="Han C."/>
            <person name="Larimer F."/>
            <person name="Land M."/>
            <person name="Hauser L."/>
            <person name="Kyrpides N."/>
            <person name="Ivanova N."/>
            <person name="Zhou J."/>
            <person name="Richardson P."/>
        </authorList>
    </citation>
    <scope>NUCLEOTIDE SEQUENCE [LARGE SCALE GENOMIC DNA]</scope>
    <source>
        <strain>ATCC 35319 / DSM 5812 / JCM 6584 / H10</strain>
    </source>
</reference>
<comment type="function">
    <text evidence="1">Involved in transcription antitermination. Required for transcription of ribosomal RNA (rRNA) genes. Binds specifically to the boxA antiterminator sequence of the ribosomal RNA (rrn) operons.</text>
</comment>
<comment type="similarity">
    <text evidence="1">Belongs to the NusB family.</text>
</comment>
<dbReference type="EMBL" id="CP001348">
    <property type="protein sequence ID" value="ACL76253.1"/>
    <property type="molecule type" value="Genomic_DNA"/>
</dbReference>
<dbReference type="RefSeq" id="WP_015925358.1">
    <property type="nucleotide sequence ID" value="NC_011898.1"/>
</dbReference>
<dbReference type="SMR" id="B8I3B0"/>
<dbReference type="STRING" id="394503.Ccel_1905"/>
<dbReference type="KEGG" id="cce:Ccel_1905"/>
<dbReference type="eggNOG" id="COG0781">
    <property type="taxonomic scope" value="Bacteria"/>
</dbReference>
<dbReference type="HOGENOM" id="CLU_087843_3_1_9"/>
<dbReference type="OrthoDB" id="9811381at2"/>
<dbReference type="Proteomes" id="UP000001349">
    <property type="component" value="Chromosome"/>
</dbReference>
<dbReference type="GO" id="GO:0005829">
    <property type="term" value="C:cytosol"/>
    <property type="evidence" value="ECO:0007669"/>
    <property type="project" value="TreeGrafter"/>
</dbReference>
<dbReference type="GO" id="GO:0003723">
    <property type="term" value="F:RNA binding"/>
    <property type="evidence" value="ECO:0007669"/>
    <property type="project" value="UniProtKB-UniRule"/>
</dbReference>
<dbReference type="GO" id="GO:0006353">
    <property type="term" value="P:DNA-templated transcription termination"/>
    <property type="evidence" value="ECO:0007669"/>
    <property type="project" value="UniProtKB-UniRule"/>
</dbReference>
<dbReference type="GO" id="GO:0031564">
    <property type="term" value="P:transcription antitermination"/>
    <property type="evidence" value="ECO:0007669"/>
    <property type="project" value="UniProtKB-KW"/>
</dbReference>
<dbReference type="Gene3D" id="1.10.940.10">
    <property type="entry name" value="NusB-like"/>
    <property type="match status" value="1"/>
</dbReference>
<dbReference type="HAMAP" id="MF_00073">
    <property type="entry name" value="NusB"/>
    <property type="match status" value="1"/>
</dbReference>
<dbReference type="InterPro" id="IPR035926">
    <property type="entry name" value="NusB-like_sf"/>
</dbReference>
<dbReference type="InterPro" id="IPR011605">
    <property type="entry name" value="NusB_fam"/>
</dbReference>
<dbReference type="InterPro" id="IPR006027">
    <property type="entry name" value="NusB_RsmB_TIM44"/>
</dbReference>
<dbReference type="NCBIfam" id="TIGR01951">
    <property type="entry name" value="nusB"/>
    <property type="match status" value="1"/>
</dbReference>
<dbReference type="PANTHER" id="PTHR11078:SF3">
    <property type="entry name" value="ANTITERMINATION NUSB DOMAIN-CONTAINING PROTEIN"/>
    <property type="match status" value="1"/>
</dbReference>
<dbReference type="PANTHER" id="PTHR11078">
    <property type="entry name" value="N UTILIZATION SUBSTANCE PROTEIN B-RELATED"/>
    <property type="match status" value="1"/>
</dbReference>
<dbReference type="Pfam" id="PF01029">
    <property type="entry name" value="NusB"/>
    <property type="match status" value="1"/>
</dbReference>
<dbReference type="SUPFAM" id="SSF48013">
    <property type="entry name" value="NusB-like"/>
    <property type="match status" value="1"/>
</dbReference>
<organism>
    <name type="scientific">Ruminiclostridium cellulolyticum (strain ATCC 35319 / DSM 5812 / JCM 6584 / H10)</name>
    <name type="common">Clostridium cellulolyticum</name>
    <dbReference type="NCBI Taxonomy" id="394503"/>
    <lineage>
        <taxon>Bacteria</taxon>
        <taxon>Bacillati</taxon>
        <taxon>Bacillota</taxon>
        <taxon>Clostridia</taxon>
        <taxon>Eubacteriales</taxon>
        <taxon>Oscillospiraceae</taxon>
        <taxon>Ruminiclostridium</taxon>
    </lineage>
</organism>
<evidence type="ECO:0000255" key="1">
    <source>
        <dbReference type="HAMAP-Rule" id="MF_00073"/>
    </source>
</evidence>
<accession>B8I3B0</accession>
<name>NUSB_RUMCH</name>
<feature type="chain" id="PRO_1000192427" description="Transcription antitermination protein NusB">
    <location>
        <begin position="1"/>
        <end position="145"/>
    </location>
</feature>